<evidence type="ECO:0000255" key="1">
    <source>
        <dbReference type="HAMAP-Rule" id="MF_01847"/>
    </source>
</evidence>
<protein>
    <recommendedName>
        <fullName evidence="1">HMP-PP phosphatase</fullName>
        <ecNumber evidence="1">3.6.1.-</ecNumber>
    </recommendedName>
</protein>
<gene>
    <name evidence="1" type="primary">cof</name>
    <name type="ordered locus">SNSL254_A0506</name>
</gene>
<accession>B4SWV0</accession>
<feature type="chain" id="PRO_1000188511" description="HMP-PP phosphatase">
    <location>
        <begin position="1"/>
        <end position="272"/>
    </location>
</feature>
<feature type="active site" description="Nucleophile" evidence="1">
    <location>
        <position position="8"/>
    </location>
</feature>
<feature type="binding site" evidence="1">
    <location>
        <position position="8"/>
    </location>
    <ligand>
        <name>Mg(2+)</name>
        <dbReference type="ChEBI" id="CHEBI:18420"/>
    </ligand>
</feature>
<feature type="binding site" evidence="1">
    <location>
        <position position="10"/>
    </location>
    <ligand>
        <name>Mg(2+)</name>
        <dbReference type="ChEBI" id="CHEBI:18420"/>
    </ligand>
</feature>
<feature type="binding site" evidence="1">
    <location>
        <position position="212"/>
    </location>
    <ligand>
        <name>Mg(2+)</name>
        <dbReference type="ChEBI" id="CHEBI:18420"/>
    </ligand>
</feature>
<sequence length="272" mass="30134">MARLAAFDMDGTLLMPDHHLGRETIATLARLRERDITLTFATGRHVLEMRHILGTLSLDAYLITGNGTRIHSLEGDVLHRQDLDPQVADTVMHHAWDTRASMHVFNDNGWFTGQEIPALLQAHVYSGFRYQVIDIKSIPAHQVTKICFCGDHDDLIRLRIQLNETLEERAHLCFSAVDCLEVLPLGCNKGSALAVLSNHLGLSLADCMAFGDAMNDREMLGSVGRGLIMGNAMPQLIAALPHLSVIGHCGNQAVSHFLTHWLDNPHLPYSPE</sequence>
<dbReference type="EC" id="3.6.1.-" evidence="1"/>
<dbReference type="EMBL" id="CP001113">
    <property type="protein sequence ID" value="ACF63004.1"/>
    <property type="molecule type" value="Genomic_DNA"/>
</dbReference>
<dbReference type="RefSeq" id="WP_000113031.1">
    <property type="nucleotide sequence ID" value="NZ_CCMR01000003.1"/>
</dbReference>
<dbReference type="SMR" id="B4SWV0"/>
<dbReference type="KEGG" id="see:SNSL254_A0506"/>
<dbReference type="HOGENOM" id="CLU_044146_5_2_6"/>
<dbReference type="Proteomes" id="UP000008824">
    <property type="component" value="Chromosome"/>
</dbReference>
<dbReference type="GO" id="GO:0002145">
    <property type="term" value="F:4-amino-5-hydroxymethyl-2-methylpyrimidine diphosphatase activity"/>
    <property type="evidence" value="ECO:0007669"/>
    <property type="project" value="RHEA"/>
</dbReference>
<dbReference type="GO" id="GO:0000287">
    <property type="term" value="F:magnesium ion binding"/>
    <property type="evidence" value="ECO:0000250"/>
    <property type="project" value="UniProtKB"/>
</dbReference>
<dbReference type="GO" id="GO:0016791">
    <property type="term" value="F:phosphatase activity"/>
    <property type="evidence" value="ECO:0000250"/>
    <property type="project" value="UniProtKB"/>
</dbReference>
<dbReference type="CDD" id="cd07516">
    <property type="entry name" value="HAD_Pase"/>
    <property type="match status" value="1"/>
</dbReference>
<dbReference type="FunFam" id="3.30.1240.10:FF:000002">
    <property type="entry name" value="HMP-PP phosphatase"/>
    <property type="match status" value="1"/>
</dbReference>
<dbReference type="Gene3D" id="3.30.1240.10">
    <property type="match status" value="1"/>
</dbReference>
<dbReference type="Gene3D" id="3.40.50.1000">
    <property type="entry name" value="HAD superfamily/HAD-like"/>
    <property type="match status" value="1"/>
</dbReference>
<dbReference type="HAMAP" id="MF_01847">
    <property type="entry name" value="HMP_PP_phosphat"/>
    <property type="match status" value="1"/>
</dbReference>
<dbReference type="InterPro" id="IPR000150">
    <property type="entry name" value="Cof"/>
</dbReference>
<dbReference type="InterPro" id="IPR036412">
    <property type="entry name" value="HAD-like_sf"/>
</dbReference>
<dbReference type="InterPro" id="IPR006379">
    <property type="entry name" value="HAD-SF_hydro_IIB"/>
</dbReference>
<dbReference type="InterPro" id="IPR023214">
    <property type="entry name" value="HAD_sf"/>
</dbReference>
<dbReference type="InterPro" id="IPR023938">
    <property type="entry name" value="HMP-PP_phosphatase"/>
</dbReference>
<dbReference type="NCBIfam" id="TIGR00099">
    <property type="entry name" value="Cof-subfamily"/>
    <property type="match status" value="1"/>
</dbReference>
<dbReference type="NCBIfam" id="TIGR01484">
    <property type="entry name" value="HAD-SF-IIB"/>
    <property type="match status" value="1"/>
</dbReference>
<dbReference type="NCBIfam" id="NF011705">
    <property type="entry name" value="PRK15126.1"/>
    <property type="match status" value="1"/>
</dbReference>
<dbReference type="PANTHER" id="PTHR47267">
    <property type="match status" value="1"/>
</dbReference>
<dbReference type="PANTHER" id="PTHR47267:SF2">
    <property type="entry name" value="HMP-PP PHOSPHATASE"/>
    <property type="match status" value="1"/>
</dbReference>
<dbReference type="Pfam" id="PF08282">
    <property type="entry name" value="Hydrolase_3"/>
    <property type="match status" value="1"/>
</dbReference>
<dbReference type="SFLD" id="SFLDG01140">
    <property type="entry name" value="C2.B:_Phosphomannomutase_and_P"/>
    <property type="match status" value="1"/>
</dbReference>
<dbReference type="SFLD" id="SFLDS00003">
    <property type="entry name" value="Haloacid_Dehalogenase"/>
    <property type="match status" value="1"/>
</dbReference>
<dbReference type="SUPFAM" id="SSF56784">
    <property type="entry name" value="HAD-like"/>
    <property type="match status" value="1"/>
</dbReference>
<dbReference type="PROSITE" id="PS01228">
    <property type="entry name" value="COF_1"/>
    <property type="match status" value="1"/>
</dbReference>
<dbReference type="PROSITE" id="PS01229">
    <property type="entry name" value="COF_2"/>
    <property type="match status" value="1"/>
</dbReference>
<comment type="function">
    <text evidence="1">Catalyzes the hydrolysis of 4-amino-2-methyl-5-hydroxymethylpyrimidine pyrophosphate (HMP-PP) to 4-amino-2-methyl-5-hydroxymethylpyrimidine phosphate (HMP-P).</text>
</comment>
<comment type="catalytic activity">
    <reaction evidence="1">
        <text>4-amino-2-methyl-5-(diphosphooxymethyl)pyrimidine + H2O = 4-amino-2-methyl-5-(phosphooxymethyl)pyrimidine + phosphate + H(+)</text>
        <dbReference type="Rhea" id="RHEA:27914"/>
        <dbReference type="ChEBI" id="CHEBI:15377"/>
        <dbReference type="ChEBI" id="CHEBI:15378"/>
        <dbReference type="ChEBI" id="CHEBI:43474"/>
        <dbReference type="ChEBI" id="CHEBI:57841"/>
        <dbReference type="ChEBI" id="CHEBI:58354"/>
    </reaction>
</comment>
<comment type="cofactor">
    <cofactor evidence="1">
        <name>Mg(2+)</name>
        <dbReference type="ChEBI" id="CHEBI:18420"/>
    </cofactor>
</comment>
<comment type="similarity">
    <text evidence="1">Belongs to the HAD-like hydrolase superfamily. Cof family.</text>
</comment>
<proteinExistence type="inferred from homology"/>
<reference key="1">
    <citation type="journal article" date="2011" name="J. Bacteriol.">
        <title>Comparative genomics of 28 Salmonella enterica isolates: evidence for CRISPR-mediated adaptive sublineage evolution.</title>
        <authorList>
            <person name="Fricke W.F."/>
            <person name="Mammel M.K."/>
            <person name="McDermott P.F."/>
            <person name="Tartera C."/>
            <person name="White D.G."/>
            <person name="Leclerc J.E."/>
            <person name="Ravel J."/>
            <person name="Cebula T.A."/>
        </authorList>
    </citation>
    <scope>NUCLEOTIDE SEQUENCE [LARGE SCALE GENOMIC DNA]</scope>
    <source>
        <strain>SL254</strain>
    </source>
</reference>
<keyword id="KW-0378">Hydrolase</keyword>
<keyword id="KW-0460">Magnesium</keyword>
<keyword id="KW-0479">Metal-binding</keyword>
<name>COF_SALNS</name>
<organism>
    <name type="scientific">Salmonella newport (strain SL254)</name>
    <dbReference type="NCBI Taxonomy" id="423368"/>
    <lineage>
        <taxon>Bacteria</taxon>
        <taxon>Pseudomonadati</taxon>
        <taxon>Pseudomonadota</taxon>
        <taxon>Gammaproteobacteria</taxon>
        <taxon>Enterobacterales</taxon>
        <taxon>Enterobacteriaceae</taxon>
        <taxon>Salmonella</taxon>
    </lineage>
</organism>